<comment type="function">
    <text evidence="1">Catalyzes the complicated ring closure reaction between the two acyclic compounds 1-deoxy-D-xylulose-5-phosphate (DXP) and 3-amino-2-oxopropyl phosphate (1-amino-acetone-3-phosphate or AAP) to form pyridoxine 5'-phosphate (PNP) and inorganic phosphate.</text>
</comment>
<comment type="catalytic activity">
    <reaction evidence="1">
        <text>3-amino-2-oxopropyl phosphate + 1-deoxy-D-xylulose 5-phosphate = pyridoxine 5'-phosphate + phosphate + 2 H2O + H(+)</text>
        <dbReference type="Rhea" id="RHEA:15265"/>
        <dbReference type="ChEBI" id="CHEBI:15377"/>
        <dbReference type="ChEBI" id="CHEBI:15378"/>
        <dbReference type="ChEBI" id="CHEBI:43474"/>
        <dbReference type="ChEBI" id="CHEBI:57279"/>
        <dbReference type="ChEBI" id="CHEBI:57792"/>
        <dbReference type="ChEBI" id="CHEBI:58589"/>
        <dbReference type="EC" id="2.6.99.2"/>
    </reaction>
</comment>
<comment type="pathway">
    <text evidence="1">Cofactor biosynthesis; pyridoxine 5'-phosphate biosynthesis; pyridoxine 5'-phosphate from D-erythrose 4-phosphate: step 5/5.</text>
</comment>
<comment type="subunit">
    <text evidence="1">Homooctamer; tetramer of dimers.</text>
</comment>
<comment type="subcellular location">
    <subcellularLocation>
        <location evidence="1">Cytoplasm</location>
    </subcellularLocation>
</comment>
<comment type="similarity">
    <text evidence="1">Belongs to the PNP synthase family.</text>
</comment>
<keyword id="KW-0963">Cytoplasm</keyword>
<keyword id="KW-0664">Pyridoxine biosynthesis</keyword>
<keyword id="KW-1185">Reference proteome</keyword>
<keyword id="KW-0808">Transferase</keyword>
<feature type="chain" id="PRO_0000190128" description="Pyridoxine 5'-phosphate synthase">
    <location>
        <begin position="1"/>
        <end position="250"/>
    </location>
</feature>
<feature type="active site" description="Proton acceptor" evidence="1">
    <location>
        <position position="44"/>
    </location>
</feature>
<feature type="active site" description="Proton acceptor" evidence="1">
    <location>
        <position position="76"/>
    </location>
</feature>
<feature type="active site" description="Proton donor" evidence="1">
    <location>
        <position position="200"/>
    </location>
</feature>
<feature type="binding site" evidence="1">
    <location>
        <position position="8"/>
    </location>
    <ligand>
        <name>3-amino-2-oxopropyl phosphate</name>
        <dbReference type="ChEBI" id="CHEBI:57279"/>
    </ligand>
</feature>
<feature type="binding site" evidence="1">
    <location>
        <position position="19"/>
    </location>
    <ligand>
        <name>3-amino-2-oxopropyl phosphate</name>
        <dbReference type="ChEBI" id="CHEBI:57279"/>
    </ligand>
</feature>
<feature type="binding site" evidence="1">
    <location>
        <position position="46"/>
    </location>
    <ligand>
        <name>1-deoxy-D-xylulose 5-phosphate</name>
        <dbReference type="ChEBI" id="CHEBI:57792"/>
    </ligand>
</feature>
<feature type="binding site" evidence="1">
    <location>
        <position position="51"/>
    </location>
    <ligand>
        <name>1-deoxy-D-xylulose 5-phosphate</name>
        <dbReference type="ChEBI" id="CHEBI:57792"/>
    </ligand>
</feature>
<feature type="binding site" evidence="1">
    <location>
        <position position="106"/>
    </location>
    <ligand>
        <name>1-deoxy-D-xylulose 5-phosphate</name>
        <dbReference type="ChEBI" id="CHEBI:57792"/>
    </ligand>
</feature>
<feature type="binding site" evidence="1">
    <location>
        <position position="201"/>
    </location>
    <ligand>
        <name>3-amino-2-oxopropyl phosphate</name>
        <dbReference type="ChEBI" id="CHEBI:57279"/>
    </ligand>
</feature>
<feature type="binding site" evidence="1">
    <location>
        <begin position="223"/>
        <end position="224"/>
    </location>
    <ligand>
        <name>3-amino-2-oxopropyl phosphate</name>
        <dbReference type="ChEBI" id="CHEBI:57279"/>
    </ligand>
</feature>
<feature type="site" description="Transition state stabilizer" evidence="1">
    <location>
        <position position="159"/>
    </location>
</feature>
<reference key="1">
    <citation type="journal article" date="2001" name="Proc. Natl. Acad. Sci. U.S.A.">
        <title>Analysis of the chromosome sequence of the legume symbiont Sinorhizobium meliloti strain 1021.</title>
        <authorList>
            <person name="Capela D."/>
            <person name="Barloy-Hubler F."/>
            <person name="Gouzy J."/>
            <person name="Bothe G."/>
            <person name="Ampe F."/>
            <person name="Batut J."/>
            <person name="Boistard P."/>
            <person name="Becker A."/>
            <person name="Boutry M."/>
            <person name="Cadieu E."/>
            <person name="Dreano S."/>
            <person name="Gloux S."/>
            <person name="Godrie T."/>
            <person name="Goffeau A."/>
            <person name="Kahn D."/>
            <person name="Kiss E."/>
            <person name="Lelaure V."/>
            <person name="Masuy D."/>
            <person name="Pohl T."/>
            <person name="Portetelle D."/>
            <person name="Puehler A."/>
            <person name="Purnelle B."/>
            <person name="Ramsperger U."/>
            <person name="Renard C."/>
            <person name="Thebault P."/>
            <person name="Vandenbol M."/>
            <person name="Weidner S."/>
            <person name="Galibert F."/>
        </authorList>
    </citation>
    <scope>NUCLEOTIDE SEQUENCE [LARGE SCALE GENOMIC DNA]</scope>
    <source>
        <strain>1021</strain>
    </source>
</reference>
<reference key="2">
    <citation type="journal article" date="2001" name="Science">
        <title>The composite genome of the legume symbiont Sinorhizobium meliloti.</title>
        <authorList>
            <person name="Galibert F."/>
            <person name="Finan T.M."/>
            <person name="Long S.R."/>
            <person name="Puehler A."/>
            <person name="Abola P."/>
            <person name="Ampe F."/>
            <person name="Barloy-Hubler F."/>
            <person name="Barnett M.J."/>
            <person name="Becker A."/>
            <person name="Boistard P."/>
            <person name="Bothe G."/>
            <person name="Boutry M."/>
            <person name="Bowser L."/>
            <person name="Buhrmester J."/>
            <person name="Cadieu E."/>
            <person name="Capela D."/>
            <person name="Chain P."/>
            <person name="Cowie A."/>
            <person name="Davis R.W."/>
            <person name="Dreano S."/>
            <person name="Federspiel N.A."/>
            <person name="Fisher R.F."/>
            <person name="Gloux S."/>
            <person name="Godrie T."/>
            <person name="Goffeau A."/>
            <person name="Golding B."/>
            <person name="Gouzy J."/>
            <person name="Gurjal M."/>
            <person name="Hernandez-Lucas I."/>
            <person name="Hong A."/>
            <person name="Huizar L."/>
            <person name="Hyman R.W."/>
            <person name="Jones T."/>
            <person name="Kahn D."/>
            <person name="Kahn M.L."/>
            <person name="Kalman S."/>
            <person name="Keating D.H."/>
            <person name="Kiss E."/>
            <person name="Komp C."/>
            <person name="Lelaure V."/>
            <person name="Masuy D."/>
            <person name="Palm C."/>
            <person name="Peck M.C."/>
            <person name="Pohl T.M."/>
            <person name="Portetelle D."/>
            <person name="Purnelle B."/>
            <person name="Ramsperger U."/>
            <person name="Surzycki R."/>
            <person name="Thebault P."/>
            <person name="Vandenbol M."/>
            <person name="Vorhoelter F.J."/>
            <person name="Weidner S."/>
            <person name="Wells D.H."/>
            <person name="Wong K."/>
            <person name="Yeh K.-C."/>
            <person name="Batut J."/>
        </authorList>
    </citation>
    <scope>NUCLEOTIDE SEQUENCE [LARGE SCALE GENOMIC DNA]</scope>
    <source>
        <strain>1021</strain>
    </source>
</reference>
<sequence length="250" mass="27386">MPAKLSVNLNAIAMLRNRRDLPWPSVTGLGRTALQAGASGLTVHPRPDQRHIRFSDLQPIRDLIDDEFPAAEFNMEGFPNEAFLELVERHEPEQVTLVPDDPAQATSDHGWDFRKSHNLLGNVVGRLKKRGFRVSLFADGIPDPEALKLAKETGADRIELYTGPYGGCYDDPEKAERIAIELGRTAEIAIGLGLAVNAGHDLTVANLPLLVEHIPELAEVSIGHGLTADALEYGMAETVRRFRRACGETA</sequence>
<accession>Q92NT6</accession>
<gene>
    <name evidence="1" type="primary">pdxJ</name>
    <name type="ordered locus">R02086</name>
    <name type="ORF">SMc01407</name>
</gene>
<evidence type="ECO:0000255" key="1">
    <source>
        <dbReference type="HAMAP-Rule" id="MF_00279"/>
    </source>
</evidence>
<dbReference type="EC" id="2.6.99.2" evidence="1"/>
<dbReference type="EMBL" id="AL591688">
    <property type="protein sequence ID" value="CAC46665.1"/>
    <property type="molecule type" value="Genomic_DNA"/>
</dbReference>
<dbReference type="RefSeq" id="NP_386192.1">
    <property type="nucleotide sequence ID" value="NC_003047.1"/>
</dbReference>
<dbReference type="RefSeq" id="WP_003533813.1">
    <property type="nucleotide sequence ID" value="NC_003047.1"/>
</dbReference>
<dbReference type="SMR" id="Q92NT6"/>
<dbReference type="EnsemblBacteria" id="CAC46665">
    <property type="protein sequence ID" value="CAC46665"/>
    <property type="gene ID" value="SMc01407"/>
</dbReference>
<dbReference type="GeneID" id="89576438"/>
<dbReference type="KEGG" id="sme:SMc01407"/>
<dbReference type="PATRIC" id="fig|266834.11.peg.3542"/>
<dbReference type="eggNOG" id="COG0854">
    <property type="taxonomic scope" value="Bacteria"/>
</dbReference>
<dbReference type="HOGENOM" id="CLU_074563_1_0_5"/>
<dbReference type="OrthoDB" id="9806590at2"/>
<dbReference type="UniPathway" id="UPA00244">
    <property type="reaction ID" value="UER00313"/>
</dbReference>
<dbReference type="Proteomes" id="UP000001976">
    <property type="component" value="Chromosome"/>
</dbReference>
<dbReference type="GO" id="GO:0005829">
    <property type="term" value="C:cytosol"/>
    <property type="evidence" value="ECO:0007669"/>
    <property type="project" value="TreeGrafter"/>
</dbReference>
<dbReference type="GO" id="GO:0033856">
    <property type="term" value="F:pyridoxine 5'-phosphate synthase activity"/>
    <property type="evidence" value="ECO:0007669"/>
    <property type="project" value="UniProtKB-EC"/>
</dbReference>
<dbReference type="GO" id="GO:0008615">
    <property type="term" value="P:pyridoxine biosynthetic process"/>
    <property type="evidence" value="ECO:0007669"/>
    <property type="project" value="UniProtKB-UniRule"/>
</dbReference>
<dbReference type="CDD" id="cd00003">
    <property type="entry name" value="PNPsynthase"/>
    <property type="match status" value="1"/>
</dbReference>
<dbReference type="Gene3D" id="3.20.20.70">
    <property type="entry name" value="Aldolase class I"/>
    <property type="match status" value="1"/>
</dbReference>
<dbReference type="HAMAP" id="MF_00279">
    <property type="entry name" value="PdxJ"/>
    <property type="match status" value="1"/>
</dbReference>
<dbReference type="InterPro" id="IPR013785">
    <property type="entry name" value="Aldolase_TIM"/>
</dbReference>
<dbReference type="InterPro" id="IPR004569">
    <property type="entry name" value="PyrdxlP_synth_PdxJ"/>
</dbReference>
<dbReference type="InterPro" id="IPR036130">
    <property type="entry name" value="Pyridoxine-5'_phos_synth"/>
</dbReference>
<dbReference type="NCBIfam" id="NF003626">
    <property type="entry name" value="PRK05265.1-4"/>
    <property type="match status" value="1"/>
</dbReference>
<dbReference type="PANTHER" id="PTHR30456">
    <property type="entry name" value="PYRIDOXINE 5'-PHOSPHATE SYNTHASE"/>
    <property type="match status" value="1"/>
</dbReference>
<dbReference type="PANTHER" id="PTHR30456:SF0">
    <property type="entry name" value="PYRIDOXINE 5'-PHOSPHATE SYNTHASE"/>
    <property type="match status" value="1"/>
</dbReference>
<dbReference type="Pfam" id="PF03740">
    <property type="entry name" value="PdxJ"/>
    <property type="match status" value="1"/>
</dbReference>
<dbReference type="SUPFAM" id="SSF63892">
    <property type="entry name" value="Pyridoxine 5'-phosphate synthase"/>
    <property type="match status" value="1"/>
</dbReference>
<name>PDXJ_RHIME</name>
<organism>
    <name type="scientific">Rhizobium meliloti (strain 1021)</name>
    <name type="common">Ensifer meliloti</name>
    <name type="synonym">Sinorhizobium meliloti</name>
    <dbReference type="NCBI Taxonomy" id="266834"/>
    <lineage>
        <taxon>Bacteria</taxon>
        <taxon>Pseudomonadati</taxon>
        <taxon>Pseudomonadota</taxon>
        <taxon>Alphaproteobacteria</taxon>
        <taxon>Hyphomicrobiales</taxon>
        <taxon>Rhizobiaceae</taxon>
        <taxon>Sinorhizobium/Ensifer group</taxon>
        <taxon>Sinorhizobium</taxon>
    </lineage>
</organism>
<protein>
    <recommendedName>
        <fullName evidence="1">Pyridoxine 5'-phosphate synthase</fullName>
        <shortName evidence="1">PNP synthase</shortName>
        <ecNumber evidence="1">2.6.99.2</ecNumber>
    </recommendedName>
</protein>
<proteinExistence type="inferred from homology"/>